<name>MTNX_BACCR</name>
<feature type="chain" id="PRO_0000357478" description="2-hydroxy-3-keto-5-methylthiopentenyl-1-phosphate phosphatase">
    <location>
        <begin position="1"/>
        <end position="219"/>
    </location>
</feature>
<reference key="1">
    <citation type="journal article" date="2003" name="Nature">
        <title>Genome sequence of Bacillus cereus and comparative analysis with Bacillus anthracis.</title>
        <authorList>
            <person name="Ivanova N."/>
            <person name="Sorokin A."/>
            <person name="Anderson I."/>
            <person name="Galleron N."/>
            <person name="Candelon B."/>
            <person name="Kapatral V."/>
            <person name="Bhattacharyya A."/>
            <person name="Reznik G."/>
            <person name="Mikhailova N."/>
            <person name="Lapidus A."/>
            <person name="Chu L."/>
            <person name="Mazur M."/>
            <person name="Goltsman E."/>
            <person name="Larsen N."/>
            <person name="D'Souza M."/>
            <person name="Walunas T."/>
            <person name="Grechkin Y."/>
            <person name="Pusch G."/>
            <person name="Haselkorn R."/>
            <person name="Fonstein M."/>
            <person name="Ehrlich S.D."/>
            <person name="Overbeek R."/>
            <person name="Kyrpides N.C."/>
        </authorList>
    </citation>
    <scope>NUCLEOTIDE SEQUENCE [LARGE SCALE GENOMIC DNA]</scope>
    <source>
        <strain>ATCC 14579 / DSM 31 / CCUG 7414 / JCM 2152 / NBRC 15305 / NCIMB 9373 / NCTC 2599 / NRRL B-3711</strain>
    </source>
</reference>
<accession>Q819E7</accession>
<keyword id="KW-0028">Amino-acid biosynthesis</keyword>
<keyword id="KW-0378">Hydrolase</keyword>
<keyword id="KW-0486">Methionine biosynthesis</keyword>
<keyword id="KW-1185">Reference proteome</keyword>
<comment type="function">
    <text evidence="1">Dephosphorylates 2-hydroxy-3-keto-5-methylthiopentenyl-1-phosphate (HK-MTPenyl-1-P) yielding 1,2-dihydroxy-3-keto-5-methylthiopentene (DHK-MTPene).</text>
</comment>
<comment type="catalytic activity">
    <reaction evidence="1">
        <text>2-hydroxy-5-methylsulfanyl-3-oxopent-1-enyl phosphate + H2O = 1,2-dihydroxy-5-(methylsulfanyl)pent-1-en-3-one + phosphate</text>
        <dbReference type="Rhea" id="RHEA:14481"/>
        <dbReference type="ChEBI" id="CHEBI:15377"/>
        <dbReference type="ChEBI" id="CHEBI:43474"/>
        <dbReference type="ChEBI" id="CHEBI:49252"/>
        <dbReference type="ChEBI" id="CHEBI:59505"/>
        <dbReference type="EC" id="3.1.3.87"/>
    </reaction>
</comment>
<comment type="pathway">
    <text evidence="1">Amino-acid biosynthesis; L-methionine biosynthesis via salvage pathway; L-methionine from S-methyl-5-thio-alpha-D-ribose 1-phosphate: step 4/6.</text>
</comment>
<comment type="similarity">
    <text evidence="1">Belongs to the HAD-like hydrolase superfamily. MtnX family.</text>
</comment>
<gene>
    <name evidence="1" type="primary">mtnX</name>
    <name type="ordered locus">BC_4037</name>
</gene>
<dbReference type="EC" id="3.1.3.87" evidence="1"/>
<dbReference type="EMBL" id="AE016877">
    <property type="protein sequence ID" value="AAP10956.1"/>
    <property type="molecule type" value="Genomic_DNA"/>
</dbReference>
<dbReference type="RefSeq" id="NP_833755.1">
    <property type="nucleotide sequence ID" value="NC_004722.1"/>
</dbReference>
<dbReference type="RefSeq" id="WP_000027460.1">
    <property type="nucleotide sequence ID" value="NC_004722.1"/>
</dbReference>
<dbReference type="SMR" id="Q819E7"/>
<dbReference type="STRING" id="226900.BC_4037"/>
<dbReference type="KEGG" id="bce:BC4037"/>
<dbReference type="PATRIC" id="fig|226900.8.peg.4168"/>
<dbReference type="HOGENOM" id="CLU_058495_2_1_9"/>
<dbReference type="UniPathway" id="UPA00904">
    <property type="reaction ID" value="UER00877"/>
</dbReference>
<dbReference type="Proteomes" id="UP000001417">
    <property type="component" value="Chromosome"/>
</dbReference>
<dbReference type="GO" id="GO:0005737">
    <property type="term" value="C:cytoplasm"/>
    <property type="evidence" value="ECO:0000318"/>
    <property type="project" value="GO_Central"/>
</dbReference>
<dbReference type="GO" id="GO:0043716">
    <property type="term" value="F:2-hydroxy-3-keto-5-methylthiopentenyl-1-phosphate phosphatase activity"/>
    <property type="evidence" value="ECO:0007669"/>
    <property type="project" value="UniProtKB-UniRule"/>
</dbReference>
<dbReference type="GO" id="GO:0008253">
    <property type="term" value="F:5'-nucleotidase activity"/>
    <property type="evidence" value="ECO:0000318"/>
    <property type="project" value="GO_Central"/>
</dbReference>
<dbReference type="GO" id="GO:0019509">
    <property type="term" value="P:L-methionine salvage from methylthioadenosine"/>
    <property type="evidence" value="ECO:0007669"/>
    <property type="project" value="UniProtKB-UniRule"/>
</dbReference>
<dbReference type="CDD" id="cd07524">
    <property type="entry name" value="HAD_Pase"/>
    <property type="match status" value="1"/>
</dbReference>
<dbReference type="Gene3D" id="3.90.1470.20">
    <property type="match status" value="1"/>
</dbReference>
<dbReference type="Gene3D" id="3.40.50.1000">
    <property type="entry name" value="HAD superfamily/HAD-like"/>
    <property type="match status" value="1"/>
</dbReference>
<dbReference type="HAMAP" id="MF_01680">
    <property type="entry name" value="Salvage_MtnX"/>
    <property type="match status" value="1"/>
</dbReference>
<dbReference type="InterPro" id="IPR050849">
    <property type="entry name" value="HAD-like_hydrolase_phosphatase"/>
</dbReference>
<dbReference type="InterPro" id="IPR036412">
    <property type="entry name" value="HAD-like_sf"/>
</dbReference>
<dbReference type="InterPro" id="IPR017718">
    <property type="entry name" value="HAD-SF_hydro_IB_MtnX"/>
</dbReference>
<dbReference type="InterPro" id="IPR006384">
    <property type="entry name" value="HAD_hydro_PyrdxlP_Pase-like"/>
</dbReference>
<dbReference type="InterPro" id="IPR023214">
    <property type="entry name" value="HAD_sf"/>
</dbReference>
<dbReference type="NCBIfam" id="TIGR01489">
    <property type="entry name" value="DKMTPPase-SF"/>
    <property type="match status" value="1"/>
</dbReference>
<dbReference type="NCBIfam" id="TIGR01488">
    <property type="entry name" value="HAD-SF-IB"/>
    <property type="match status" value="1"/>
</dbReference>
<dbReference type="NCBIfam" id="NF007103">
    <property type="entry name" value="PRK09552.1"/>
    <property type="match status" value="1"/>
</dbReference>
<dbReference type="NCBIfam" id="TIGR03333">
    <property type="entry name" value="salvage_mtnX"/>
    <property type="match status" value="1"/>
</dbReference>
<dbReference type="PANTHER" id="PTHR28181:SF2">
    <property type="entry name" value="PHOSPHORIC MONOESTER HYDROLASE"/>
    <property type="match status" value="1"/>
</dbReference>
<dbReference type="PANTHER" id="PTHR28181">
    <property type="entry name" value="UPF0655 PROTEIN YCR015C"/>
    <property type="match status" value="1"/>
</dbReference>
<dbReference type="Pfam" id="PF12710">
    <property type="entry name" value="HAD"/>
    <property type="match status" value="1"/>
</dbReference>
<dbReference type="SUPFAM" id="SSF56784">
    <property type="entry name" value="HAD-like"/>
    <property type="match status" value="1"/>
</dbReference>
<sequence length="219" mass="25042">MSIQVFCDFDGTITNNDNIMSIMEKFAPPEAEEVKNKILSQELSIQEGVSQLFQLIPTNLHDDIIQFLIETAEIRSGFHEFIQFVKENNISFYVISGGMDFFVYPLLQGIIPKEQIYCNETDFSAEFITVKWPHSCDDHCQIHCGLCKSSLIRKLSDTDDFHIVIGDSITDLQAAKQADKVFARDFLITKCEENHIAYTPFETFQDVQAELKLLLEVKA</sequence>
<organism>
    <name type="scientific">Bacillus cereus (strain ATCC 14579 / DSM 31 / CCUG 7414 / JCM 2152 / NBRC 15305 / NCIMB 9373 / NCTC 2599 / NRRL B-3711)</name>
    <dbReference type="NCBI Taxonomy" id="226900"/>
    <lineage>
        <taxon>Bacteria</taxon>
        <taxon>Bacillati</taxon>
        <taxon>Bacillota</taxon>
        <taxon>Bacilli</taxon>
        <taxon>Bacillales</taxon>
        <taxon>Bacillaceae</taxon>
        <taxon>Bacillus</taxon>
        <taxon>Bacillus cereus group</taxon>
    </lineage>
</organism>
<proteinExistence type="inferred from homology"/>
<evidence type="ECO:0000255" key="1">
    <source>
        <dbReference type="HAMAP-Rule" id="MF_01680"/>
    </source>
</evidence>
<protein>
    <recommendedName>
        <fullName evidence="1">2-hydroxy-3-keto-5-methylthiopentenyl-1-phosphate phosphatase</fullName>
        <shortName evidence="1">HK-MTPenyl-1-P phosphatase</shortName>
        <ecNumber evidence="1">3.1.3.87</ecNumber>
    </recommendedName>
</protein>